<accession>B5YZV9</accession>
<feature type="chain" id="PRO_1000127216" description="Cell division protein ZipA">
    <location>
        <begin position="1"/>
        <end position="332"/>
    </location>
</feature>
<feature type="topological domain" description="Periplasmic" evidence="1">
    <location>
        <begin position="1"/>
        <end position="6"/>
    </location>
</feature>
<feature type="transmembrane region" description="Helical" evidence="1">
    <location>
        <begin position="7"/>
        <end position="27"/>
    </location>
</feature>
<feature type="topological domain" description="Cytoplasmic" evidence="1">
    <location>
        <begin position="28"/>
        <end position="332"/>
    </location>
</feature>
<feature type="region of interest" description="Disordered" evidence="2">
    <location>
        <begin position="42"/>
        <end position="190"/>
    </location>
</feature>
<feature type="compositionally biased region" description="Acidic residues" evidence="2">
    <location>
        <begin position="51"/>
        <end position="63"/>
    </location>
</feature>
<feature type="compositionally biased region" description="Low complexity" evidence="2">
    <location>
        <begin position="99"/>
        <end position="115"/>
    </location>
</feature>
<feature type="compositionally biased region" description="Low complexity" evidence="2">
    <location>
        <begin position="123"/>
        <end position="175"/>
    </location>
</feature>
<name>ZIPA_ECO5E</name>
<proteinExistence type="inferred from homology"/>
<reference key="1">
    <citation type="journal article" date="2011" name="Proc. Natl. Acad. Sci. U.S.A.">
        <title>Genomic anatomy of Escherichia coli O157:H7 outbreaks.</title>
        <authorList>
            <person name="Eppinger M."/>
            <person name="Mammel M.K."/>
            <person name="Leclerc J.E."/>
            <person name="Ravel J."/>
            <person name="Cebula T.A."/>
        </authorList>
    </citation>
    <scope>NUCLEOTIDE SEQUENCE [LARGE SCALE GENOMIC DNA]</scope>
    <source>
        <strain>EC4115 / EHEC</strain>
    </source>
</reference>
<protein>
    <recommendedName>
        <fullName evidence="1">Cell division protein ZipA</fullName>
    </recommendedName>
</protein>
<comment type="function">
    <text evidence="1">Essential cell division protein that stabilizes the FtsZ protofilaments by cross-linking them and that serves as a cytoplasmic membrane anchor for the Z ring. Also required for the recruitment to the septal ring of downstream cell division proteins.</text>
</comment>
<comment type="subunit">
    <text evidence="1">Interacts with FtsZ via their C-terminal domains.</text>
</comment>
<comment type="subcellular location">
    <subcellularLocation>
        <location evidence="1">Cell inner membrane</location>
        <topology evidence="1">Single-pass type I membrane protein</topology>
    </subcellularLocation>
    <text evidence="1">Localizes to the Z ring in an FtsZ-dependent manner.</text>
</comment>
<comment type="similarity">
    <text evidence="1">Belongs to the ZipA family.</text>
</comment>
<dbReference type="EMBL" id="CP001164">
    <property type="protein sequence ID" value="ACI39065.1"/>
    <property type="molecule type" value="Genomic_DNA"/>
</dbReference>
<dbReference type="RefSeq" id="WP_001299866.1">
    <property type="nucleotide sequence ID" value="NC_011353.1"/>
</dbReference>
<dbReference type="SMR" id="B5YZV9"/>
<dbReference type="KEGG" id="ecf:ECH74115_3643"/>
<dbReference type="HOGENOM" id="CLU_030174_1_0_6"/>
<dbReference type="GO" id="GO:0032153">
    <property type="term" value="C:cell division site"/>
    <property type="evidence" value="ECO:0007669"/>
    <property type="project" value="UniProtKB-UniRule"/>
</dbReference>
<dbReference type="GO" id="GO:0005886">
    <property type="term" value="C:plasma membrane"/>
    <property type="evidence" value="ECO:0007669"/>
    <property type="project" value="UniProtKB-SubCell"/>
</dbReference>
<dbReference type="GO" id="GO:0000917">
    <property type="term" value="P:division septum assembly"/>
    <property type="evidence" value="ECO:0007669"/>
    <property type="project" value="TreeGrafter"/>
</dbReference>
<dbReference type="GO" id="GO:0043093">
    <property type="term" value="P:FtsZ-dependent cytokinesis"/>
    <property type="evidence" value="ECO:0007669"/>
    <property type="project" value="UniProtKB-UniRule"/>
</dbReference>
<dbReference type="CDD" id="cd00231">
    <property type="entry name" value="ZipA"/>
    <property type="match status" value="1"/>
</dbReference>
<dbReference type="FunFam" id="3.30.1400.10:FF:000001">
    <property type="entry name" value="Cell division protein ZipA"/>
    <property type="match status" value="1"/>
</dbReference>
<dbReference type="Gene3D" id="3.30.1400.10">
    <property type="entry name" value="ZipA, C-terminal FtsZ-binding domain"/>
    <property type="match status" value="1"/>
</dbReference>
<dbReference type="HAMAP" id="MF_00509">
    <property type="entry name" value="ZipA"/>
    <property type="match status" value="1"/>
</dbReference>
<dbReference type="InterPro" id="IPR011919">
    <property type="entry name" value="Cell_div_ZipA"/>
</dbReference>
<dbReference type="InterPro" id="IPR007449">
    <property type="entry name" value="ZipA_FtsZ-bd_C"/>
</dbReference>
<dbReference type="InterPro" id="IPR036765">
    <property type="entry name" value="ZipA_FtsZ-bd_C_sf"/>
</dbReference>
<dbReference type="NCBIfam" id="TIGR02205">
    <property type="entry name" value="septum_zipA"/>
    <property type="match status" value="1"/>
</dbReference>
<dbReference type="PANTHER" id="PTHR38685">
    <property type="entry name" value="CELL DIVISION PROTEIN ZIPA"/>
    <property type="match status" value="1"/>
</dbReference>
<dbReference type="PANTHER" id="PTHR38685:SF1">
    <property type="entry name" value="CELL DIVISION PROTEIN ZIPA"/>
    <property type="match status" value="1"/>
</dbReference>
<dbReference type="Pfam" id="PF04354">
    <property type="entry name" value="ZipA_C"/>
    <property type="match status" value="1"/>
</dbReference>
<dbReference type="SMART" id="SM00771">
    <property type="entry name" value="ZipA_C"/>
    <property type="match status" value="1"/>
</dbReference>
<dbReference type="SUPFAM" id="SSF64383">
    <property type="entry name" value="Cell-division protein ZipA, C-terminal domain"/>
    <property type="match status" value="1"/>
</dbReference>
<evidence type="ECO:0000255" key="1">
    <source>
        <dbReference type="HAMAP-Rule" id="MF_00509"/>
    </source>
</evidence>
<evidence type="ECO:0000256" key="2">
    <source>
        <dbReference type="SAM" id="MobiDB-lite"/>
    </source>
</evidence>
<sequence>MMQDLRLILIIVGAIAIIALLVHGFWTSRKERSSMFRDRPLKRMKSKRDDDSYDEDVEDDEGVGEVRVHRVNHAPANAQEHEAARPSPQHQYQPPYASAQPRQPVQQPPEAQVPPQHAPRPAQPVQQPVQQPAYQPQPEQPLQQPVSPQVAPAPQPVHSAPQPAQQAFQPAEPVAAPQPEPVAEPAPVMDKPKRKEAVIIMNVAAHHGSELNGELLLNSIQQAGFIFGDMNIYHRHLSPDGSGPALFSLANMVKPGTFDPEMKDFTTPGVTIFMQVPSYGDELQNFKLMLQSAQHIADEVGGVVLDDQRRMMTPQKLREYQDIIREVKDANA</sequence>
<gene>
    <name evidence="1" type="primary">zipA</name>
    <name type="ordered locus">ECH74115_3643</name>
</gene>
<keyword id="KW-0131">Cell cycle</keyword>
<keyword id="KW-0132">Cell division</keyword>
<keyword id="KW-0997">Cell inner membrane</keyword>
<keyword id="KW-1003">Cell membrane</keyword>
<keyword id="KW-0472">Membrane</keyword>
<keyword id="KW-0812">Transmembrane</keyword>
<keyword id="KW-1133">Transmembrane helix</keyword>
<organism>
    <name type="scientific">Escherichia coli O157:H7 (strain EC4115 / EHEC)</name>
    <dbReference type="NCBI Taxonomy" id="444450"/>
    <lineage>
        <taxon>Bacteria</taxon>
        <taxon>Pseudomonadati</taxon>
        <taxon>Pseudomonadota</taxon>
        <taxon>Gammaproteobacteria</taxon>
        <taxon>Enterobacterales</taxon>
        <taxon>Enterobacteriaceae</taxon>
        <taxon>Escherichia</taxon>
    </lineage>
</organism>